<reference key="1">
    <citation type="journal article" date="2004" name="Nat. Genet.">
        <title>Complete sequencing and characterization of 21,243 full-length human cDNAs.</title>
        <authorList>
            <person name="Ota T."/>
            <person name="Suzuki Y."/>
            <person name="Nishikawa T."/>
            <person name="Otsuki T."/>
            <person name="Sugiyama T."/>
            <person name="Irie R."/>
            <person name="Wakamatsu A."/>
            <person name="Hayashi K."/>
            <person name="Sato H."/>
            <person name="Nagai K."/>
            <person name="Kimura K."/>
            <person name="Makita H."/>
            <person name="Sekine M."/>
            <person name="Obayashi M."/>
            <person name="Nishi T."/>
            <person name="Shibahara T."/>
            <person name="Tanaka T."/>
            <person name="Ishii S."/>
            <person name="Yamamoto J."/>
            <person name="Saito K."/>
            <person name="Kawai Y."/>
            <person name="Isono Y."/>
            <person name="Nakamura Y."/>
            <person name="Nagahari K."/>
            <person name="Murakami K."/>
            <person name="Yasuda T."/>
            <person name="Iwayanagi T."/>
            <person name="Wagatsuma M."/>
            <person name="Shiratori A."/>
            <person name="Sudo H."/>
            <person name="Hosoiri T."/>
            <person name="Kaku Y."/>
            <person name="Kodaira H."/>
            <person name="Kondo H."/>
            <person name="Sugawara M."/>
            <person name="Takahashi M."/>
            <person name="Kanda K."/>
            <person name="Yokoi T."/>
            <person name="Furuya T."/>
            <person name="Kikkawa E."/>
            <person name="Omura Y."/>
            <person name="Abe K."/>
            <person name="Kamihara K."/>
            <person name="Katsuta N."/>
            <person name="Sato K."/>
            <person name="Tanikawa M."/>
            <person name="Yamazaki M."/>
            <person name="Ninomiya K."/>
            <person name="Ishibashi T."/>
            <person name="Yamashita H."/>
            <person name="Murakawa K."/>
            <person name="Fujimori K."/>
            <person name="Tanai H."/>
            <person name="Kimata M."/>
            <person name="Watanabe M."/>
            <person name="Hiraoka S."/>
            <person name="Chiba Y."/>
            <person name="Ishida S."/>
            <person name="Ono Y."/>
            <person name="Takiguchi S."/>
            <person name="Watanabe S."/>
            <person name="Yosida M."/>
            <person name="Hotuta T."/>
            <person name="Kusano J."/>
            <person name="Kanehori K."/>
            <person name="Takahashi-Fujii A."/>
            <person name="Hara H."/>
            <person name="Tanase T.-O."/>
            <person name="Nomura Y."/>
            <person name="Togiya S."/>
            <person name="Komai F."/>
            <person name="Hara R."/>
            <person name="Takeuchi K."/>
            <person name="Arita M."/>
            <person name="Imose N."/>
            <person name="Musashino K."/>
            <person name="Yuuki H."/>
            <person name="Oshima A."/>
            <person name="Sasaki N."/>
            <person name="Aotsuka S."/>
            <person name="Yoshikawa Y."/>
            <person name="Matsunawa H."/>
            <person name="Ichihara T."/>
            <person name="Shiohata N."/>
            <person name="Sano S."/>
            <person name="Moriya S."/>
            <person name="Momiyama H."/>
            <person name="Satoh N."/>
            <person name="Takami S."/>
            <person name="Terashima Y."/>
            <person name="Suzuki O."/>
            <person name="Nakagawa S."/>
            <person name="Senoh A."/>
            <person name="Mizoguchi H."/>
            <person name="Goto Y."/>
            <person name="Shimizu F."/>
            <person name="Wakebe H."/>
            <person name="Hishigaki H."/>
            <person name="Watanabe T."/>
            <person name="Sugiyama A."/>
            <person name="Takemoto M."/>
            <person name="Kawakami B."/>
            <person name="Yamazaki M."/>
            <person name="Watanabe K."/>
            <person name="Kumagai A."/>
            <person name="Itakura S."/>
            <person name="Fukuzumi Y."/>
            <person name="Fujimori Y."/>
            <person name="Komiyama M."/>
            <person name="Tashiro H."/>
            <person name="Tanigami A."/>
            <person name="Fujiwara T."/>
            <person name="Ono T."/>
            <person name="Yamada K."/>
            <person name="Fujii Y."/>
            <person name="Ozaki K."/>
            <person name="Hirao M."/>
            <person name="Ohmori Y."/>
            <person name="Kawabata A."/>
            <person name="Hikiji T."/>
            <person name="Kobatake N."/>
            <person name="Inagaki H."/>
            <person name="Ikema Y."/>
            <person name="Okamoto S."/>
            <person name="Okitani R."/>
            <person name="Kawakami T."/>
            <person name="Noguchi S."/>
            <person name="Itoh T."/>
            <person name="Shigeta K."/>
            <person name="Senba T."/>
            <person name="Matsumura K."/>
            <person name="Nakajima Y."/>
            <person name="Mizuno T."/>
            <person name="Morinaga M."/>
            <person name="Sasaki M."/>
            <person name="Togashi T."/>
            <person name="Oyama M."/>
            <person name="Hata H."/>
            <person name="Watanabe M."/>
            <person name="Komatsu T."/>
            <person name="Mizushima-Sugano J."/>
            <person name="Satoh T."/>
            <person name="Shirai Y."/>
            <person name="Takahashi Y."/>
            <person name="Nakagawa K."/>
            <person name="Okumura K."/>
            <person name="Nagase T."/>
            <person name="Nomura N."/>
            <person name="Kikuchi H."/>
            <person name="Masuho Y."/>
            <person name="Yamashita R."/>
            <person name="Nakai K."/>
            <person name="Yada T."/>
            <person name="Nakamura Y."/>
            <person name="Ohara O."/>
            <person name="Isogai T."/>
            <person name="Sugano S."/>
        </authorList>
    </citation>
    <scope>NUCLEOTIDE SEQUENCE [LARGE SCALE MRNA]</scope>
    <source>
        <tissue>Teratocarcinoma</tissue>
    </source>
</reference>
<reference key="2">
    <citation type="journal article" date="2006" name="Nature">
        <title>The DNA sequence and biological annotation of human chromosome 1.</title>
        <authorList>
            <person name="Gregory S.G."/>
            <person name="Barlow K.F."/>
            <person name="McLay K.E."/>
            <person name="Kaul R."/>
            <person name="Swarbreck D."/>
            <person name="Dunham A."/>
            <person name="Scott C.E."/>
            <person name="Howe K.L."/>
            <person name="Woodfine K."/>
            <person name="Spencer C.C.A."/>
            <person name="Jones M.C."/>
            <person name="Gillson C."/>
            <person name="Searle S."/>
            <person name="Zhou Y."/>
            <person name="Kokocinski F."/>
            <person name="McDonald L."/>
            <person name="Evans R."/>
            <person name="Phillips K."/>
            <person name="Atkinson A."/>
            <person name="Cooper R."/>
            <person name="Jones C."/>
            <person name="Hall R.E."/>
            <person name="Andrews T.D."/>
            <person name="Lloyd C."/>
            <person name="Ainscough R."/>
            <person name="Almeida J.P."/>
            <person name="Ambrose K.D."/>
            <person name="Anderson F."/>
            <person name="Andrew R.W."/>
            <person name="Ashwell R.I.S."/>
            <person name="Aubin K."/>
            <person name="Babbage A.K."/>
            <person name="Bagguley C.L."/>
            <person name="Bailey J."/>
            <person name="Beasley H."/>
            <person name="Bethel G."/>
            <person name="Bird C.P."/>
            <person name="Bray-Allen S."/>
            <person name="Brown J.Y."/>
            <person name="Brown A.J."/>
            <person name="Buckley D."/>
            <person name="Burton J."/>
            <person name="Bye J."/>
            <person name="Carder C."/>
            <person name="Chapman J.C."/>
            <person name="Clark S.Y."/>
            <person name="Clarke G."/>
            <person name="Clee C."/>
            <person name="Cobley V."/>
            <person name="Collier R.E."/>
            <person name="Corby N."/>
            <person name="Coville G.J."/>
            <person name="Davies J."/>
            <person name="Deadman R."/>
            <person name="Dunn M."/>
            <person name="Earthrowl M."/>
            <person name="Ellington A.G."/>
            <person name="Errington H."/>
            <person name="Frankish A."/>
            <person name="Frankland J."/>
            <person name="French L."/>
            <person name="Garner P."/>
            <person name="Garnett J."/>
            <person name="Gay L."/>
            <person name="Ghori M.R.J."/>
            <person name="Gibson R."/>
            <person name="Gilby L.M."/>
            <person name="Gillett W."/>
            <person name="Glithero R.J."/>
            <person name="Grafham D.V."/>
            <person name="Griffiths C."/>
            <person name="Griffiths-Jones S."/>
            <person name="Grocock R."/>
            <person name="Hammond S."/>
            <person name="Harrison E.S.I."/>
            <person name="Hart E."/>
            <person name="Haugen E."/>
            <person name="Heath P.D."/>
            <person name="Holmes S."/>
            <person name="Holt K."/>
            <person name="Howden P.J."/>
            <person name="Hunt A.R."/>
            <person name="Hunt S.E."/>
            <person name="Hunter G."/>
            <person name="Isherwood J."/>
            <person name="James R."/>
            <person name="Johnson C."/>
            <person name="Johnson D."/>
            <person name="Joy A."/>
            <person name="Kay M."/>
            <person name="Kershaw J.K."/>
            <person name="Kibukawa M."/>
            <person name="Kimberley A.M."/>
            <person name="King A."/>
            <person name="Knights A.J."/>
            <person name="Lad H."/>
            <person name="Laird G."/>
            <person name="Lawlor S."/>
            <person name="Leongamornlert D.A."/>
            <person name="Lloyd D.M."/>
            <person name="Loveland J."/>
            <person name="Lovell J."/>
            <person name="Lush M.J."/>
            <person name="Lyne R."/>
            <person name="Martin S."/>
            <person name="Mashreghi-Mohammadi M."/>
            <person name="Matthews L."/>
            <person name="Matthews N.S.W."/>
            <person name="McLaren S."/>
            <person name="Milne S."/>
            <person name="Mistry S."/>
            <person name="Moore M.J.F."/>
            <person name="Nickerson T."/>
            <person name="O'Dell C.N."/>
            <person name="Oliver K."/>
            <person name="Palmeiri A."/>
            <person name="Palmer S.A."/>
            <person name="Parker A."/>
            <person name="Patel D."/>
            <person name="Pearce A.V."/>
            <person name="Peck A.I."/>
            <person name="Pelan S."/>
            <person name="Phelps K."/>
            <person name="Phillimore B.J."/>
            <person name="Plumb R."/>
            <person name="Rajan J."/>
            <person name="Raymond C."/>
            <person name="Rouse G."/>
            <person name="Saenphimmachak C."/>
            <person name="Sehra H.K."/>
            <person name="Sheridan E."/>
            <person name="Shownkeen R."/>
            <person name="Sims S."/>
            <person name="Skuce C.D."/>
            <person name="Smith M."/>
            <person name="Steward C."/>
            <person name="Subramanian S."/>
            <person name="Sycamore N."/>
            <person name="Tracey A."/>
            <person name="Tromans A."/>
            <person name="Van Helmond Z."/>
            <person name="Wall M."/>
            <person name="Wallis J.M."/>
            <person name="White S."/>
            <person name="Whitehead S.L."/>
            <person name="Wilkinson J.E."/>
            <person name="Willey D.L."/>
            <person name="Williams H."/>
            <person name="Wilming L."/>
            <person name="Wray P.W."/>
            <person name="Wu Z."/>
            <person name="Coulson A."/>
            <person name="Vaudin M."/>
            <person name="Sulston J.E."/>
            <person name="Durbin R.M."/>
            <person name="Hubbard T."/>
            <person name="Wooster R."/>
            <person name="Dunham I."/>
            <person name="Carter N.P."/>
            <person name="McVean G."/>
            <person name="Ross M.T."/>
            <person name="Harrow J."/>
            <person name="Olson M.V."/>
            <person name="Beck S."/>
            <person name="Rogers J."/>
            <person name="Bentley D.R."/>
        </authorList>
    </citation>
    <scope>NUCLEOTIDE SEQUENCE [LARGE SCALE GENOMIC DNA]</scope>
</reference>
<reference key="3">
    <citation type="submission" date="2005-07" db="EMBL/GenBank/DDBJ databases">
        <authorList>
            <person name="Mural R.J."/>
            <person name="Istrail S."/>
            <person name="Sutton G.G."/>
            <person name="Florea L."/>
            <person name="Halpern A.L."/>
            <person name="Mobarry C.M."/>
            <person name="Lippert R."/>
            <person name="Walenz B."/>
            <person name="Shatkay H."/>
            <person name="Dew I."/>
            <person name="Miller J.R."/>
            <person name="Flanigan M.J."/>
            <person name="Edwards N.J."/>
            <person name="Bolanos R."/>
            <person name="Fasulo D."/>
            <person name="Halldorsson B.V."/>
            <person name="Hannenhalli S."/>
            <person name="Turner R."/>
            <person name="Yooseph S."/>
            <person name="Lu F."/>
            <person name="Nusskern D.R."/>
            <person name="Shue B.C."/>
            <person name="Zheng X.H."/>
            <person name="Zhong F."/>
            <person name="Delcher A.L."/>
            <person name="Huson D.H."/>
            <person name="Kravitz S.A."/>
            <person name="Mouchard L."/>
            <person name="Reinert K."/>
            <person name="Remington K.A."/>
            <person name="Clark A.G."/>
            <person name="Waterman M.S."/>
            <person name="Eichler E.E."/>
            <person name="Adams M.D."/>
            <person name="Hunkapiller M.W."/>
            <person name="Myers E.W."/>
            <person name="Venter J.C."/>
        </authorList>
    </citation>
    <scope>NUCLEOTIDE SEQUENCE [LARGE SCALE GENOMIC DNA]</scope>
</reference>
<reference key="4">
    <citation type="journal article" date="2004" name="Genome Res.">
        <title>The status, quality, and expansion of the NIH full-length cDNA project: the Mammalian Gene Collection (MGC).</title>
        <authorList>
            <consortium name="The MGC Project Team"/>
        </authorList>
    </citation>
    <scope>NUCLEOTIDE SEQUENCE [LARGE SCALE MRNA]</scope>
    <source>
        <tissue>Testis</tissue>
    </source>
</reference>
<proteinExistence type="evidence at transcript level"/>
<name>CA213_HUMAN</name>
<protein>
    <recommendedName>
        <fullName evidence="3">Putative uncharacterized protein ZNF436-AS1</fullName>
    </recommendedName>
    <alternativeName>
        <fullName evidence="3">ZNF436 antisense RNA 1</fullName>
    </alternativeName>
    <alternativeName>
        <fullName evidence="2">ZNF436 antisense gene protein 1</fullName>
    </alternativeName>
</protein>
<gene>
    <name evidence="3" type="primary">ZNF436-AS1</name>
    <name evidence="3" type="synonym">C1orf213</name>
</gene>
<keyword id="KW-1185">Reference proteome</keyword>
<accession>Q8NC38</accession>
<accession>Q2VPR7</accession>
<dbReference type="EMBL" id="AK074989">
    <property type="protein sequence ID" value="BAC11338.1"/>
    <property type="molecule type" value="mRNA"/>
</dbReference>
<dbReference type="EMBL" id="AL109936">
    <property type="status" value="NOT_ANNOTATED_CDS"/>
    <property type="molecule type" value="Genomic_DNA"/>
</dbReference>
<dbReference type="EMBL" id="CH471134">
    <property type="protein sequence ID" value="EAW95046.1"/>
    <property type="molecule type" value="Genomic_DNA"/>
</dbReference>
<dbReference type="EMBL" id="BC028411">
    <property type="protein sequence ID" value="AAH28411.1"/>
    <property type="molecule type" value="mRNA"/>
</dbReference>
<dbReference type="EMBL" id="BC054115">
    <property type="protein sequence ID" value="AAH54115.1"/>
    <property type="molecule type" value="mRNA"/>
</dbReference>
<dbReference type="EMBL" id="BC068594">
    <property type="protein sequence ID" value="AAH68594.1"/>
    <property type="molecule type" value="mRNA"/>
</dbReference>
<dbReference type="BioMuta" id="HGNC:25122"/>
<dbReference type="MassIVE" id="Q8NC38"/>
<dbReference type="PeptideAtlas" id="Q8NC38"/>
<dbReference type="ProteomicsDB" id="72847"/>
<dbReference type="AGR" id="HGNC:25122"/>
<dbReference type="GeneCards" id="ZNF436-AS1"/>
<dbReference type="HGNC" id="HGNC:25122">
    <property type="gene designation" value="ZNF436-AS1"/>
</dbReference>
<dbReference type="neXtProt" id="NX_Q8NC38"/>
<dbReference type="InParanoid" id="Q8NC38"/>
<dbReference type="PAN-GO" id="Q8NC38">
    <property type="GO annotations" value="0 GO annotations based on evolutionary models"/>
</dbReference>
<dbReference type="PhylomeDB" id="Q8NC38"/>
<dbReference type="PathwayCommons" id="Q8NC38"/>
<dbReference type="Pharos" id="Q8NC38">
    <property type="development level" value="Tdark"/>
</dbReference>
<dbReference type="PRO" id="PR:Q8NC38"/>
<dbReference type="Proteomes" id="UP000005640">
    <property type="component" value="Unplaced"/>
</dbReference>
<dbReference type="RNAct" id="Q8NC38">
    <property type="molecule type" value="protein"/>
</dbReference>
<organism>
    <name type="scientific">Homo sapiens</name>
    <name type="common">Human</name>
    <dbReference type="NCBI Taxonomy" id="9606"/>
    <lineage>
        <taxon>Eukaryota</taxon>
        <taxon>Metazoa</taxon>
        <taxon>Chordata</taxon>
        <taxon>Craniata</taxon>
        <taxon>Vertebrata</taxon>
        <taxon>Euteleostomi</taxon>
        <taxon>Mammalia</taxon>
        <taxon>Eutheria</taxon>
        <taxon>Euarchontoglires</taxon>
        <taxon>Primates</taxon>
        <taxon>Haplorrhini</taxon>
        <taxon>Catarrhini</taxon>
        <taxon>Hominidae</taxon>
        <taxon>Homo</taxon>
    </lineage>
</organism>
<sequence length="126" mass="14381">MLAVPVRLKVGSRKPEWGTNRLTSCPAKDPLDRRLQNLRDRERVPEPQRSLRPGVQEDSREHGQVPEVSDPQVDLEFVDLQAKPRYRRLILKTQIPEASDSQAAQKPQAHRQIPETTEAGRETTSN</sequence>
<evidence type="ECO:0000256" key="1">
    <source>
        <dbReference type="SAM" id="MobiDB-lite"/>
    </source>
</evidence>
<evidence type="ECO:0000305" key="2"/>
<evidence type="ECO:0000312" key="3">
    <source>
        <dbReference type="HGNC" id="HGNC:25122"/>
    </source>
</evidence>
<feature type="chain" id="PRO_0000304996" description="Putative uncharacterized protein ZNF436-AS1">
    <location>
        <begin position="1"/>
        <end position="126"/>
    </location>
</feature>
<feature type="region of interest" description="Disordered" evidence="1">
    <location>
        <begin position="15"/>
        <end position="72"/>
    </location>
</feature>
<feature type="region of interest" description="Disordered" evidence="1">
    <location>
        <begin position="93"/>
        <end position="126"/>
    </location>
</feature>
<feature type="compositionally biased region" description="Basic and acidic residues" evidence="1">
    <location>
        <begin position="29"/>
        <end position="46"/>
    </location>
</feature>
<feature type="compositionally biased region" description="Basic and acidic residues" evidence="1">
    <location>
        <begin position="55"/>
        <end position="64"/>
    </location>
</feature>
<feature type="sequence conflict" description="In Ref. 4; AAH28411." evidence="2" ref="4">
    <original>G</original>
    <variation>R</variation>
    <location>
        <position position="63"/>
    </location>
</feature>
<feature type="sequence conflict" description="In Ref. 1; BAC11338, 3; EAW95046 and 4; AAH54115/AAH68594." evidence="2" ref="1 3 4">
    <original>R</original>
    <variation>Q</variation>
    <location>
        <position position="121"/>
    </location>
</feature>